<organism>
    <name type="scientific">Homo sapiens</name>
    <name type="common">Human</name>
    <dbReference type="NCBI Taxonomy" id="9606"/>
    <lineage>
        <taxon>Eukaryota</taxon>
        <taxon>Metazoa</taxon>
        <taxon>Chordata</taxon>
        <taxon>Craniata</taxon>
        <taxon>Vertebrata</taxon>
        <taxon>Euteleostomi</taxon>
        <taxon>Mammalia</taxon>
        <taxon>Eutheria</taxon>
        <taxon>Euarchontoglires</taxon>
        <taxon>Primates</taxon>
        <taxon>Haplorrhini</taxon>
        <taxon>Catarrhini</taxon>
        <taxon>Hominidae</taxon>
        <taxon>Homo</taxon>
    </lineage>
</organism>
<evidence type="ECO:0000255" key="1">
    <source>
        <dbReference type="PROSITE-ProRule" id="PRU00042"/>
    </source>
</evidence>
<evidence type="ECO:0000305" key="2"/>
<sequence length="819" mass="94331">MMNLEKNFDKTTLFNHMRTDKRGKCSDLNEYGTSCDKTTAVEYNKVHMAMTHYECNERGINFSRKSPLTQSQRTITGWSAFESNKCEENFSQSSAHIVHQKTQAGDKFGEHNECTDALYQKLDFTAHQRIHTDFTAHQKFYLSDEHGKCRKSFYWKAHLIQHERPHSGEKTYQYEECAKSFCSSSHPIQHPGTYVGFKLYECNECGKAFCQNSNLSKHLRIHTKEKPCDNNGCGRSYKSPLIGHQKTDAEMELCGGSEYGKTSHLKGHQRILMGEKPYECIECGKTFSKTSHLRAHQRIHTGEKPYECVECEKTFSHKTHLSVHQRVHTGEKPYECNDCGKSFTYNSALRAHQRIHTGEKPYECSDCEKTFAHNSALRAHHRIHTGEKPYECNECGRSFAHISVLKAHQRIHTREKPYECNECGRSFTYNSALRAHQRIHTGRKPYECSDCEKTFAHNSALKIHQRIHTGEKPYKCNECEKTFAHNSALRAHQNIHTGEKLYECSECGKTFFQKTRLSTHRRIHTGEKPYECSKCGKTFSQKSYLSGHERIHTGEKPYECNVCGKTFVYKAALIVHQRIHTGEKPYECNECGKTFSQRTHLCAHQRIHTGEKPYECNECGKTFADNSALRAHHRIHTGEKPYECNDCGKTFSKTSHLRAHLRTRSGEKPYECSECGKTFSEKSYVSAHQRVHTGEKPYECNVCGKPFAHNSTLRVHQRIHTGEKSYECNDCGKTFSQKSHLSAHQRIHTGEKPYECNECGKAFAQNSTLRVHQRIHTGEKPYECDECGKTFVRKAALRVHHTRMHTREKTLACNGFGKS</sequence>
<protein>
    <recommendedName>
        <fullName>Zinc finger protein 658B</fullName>
    </recommendedName>
</protein>
<gene>
    <name type="primary">ZNF658B</name>
</gene>
<proteinExistence type="evidence at transcript level"/>
<reference key="1">
    <citation type="journal article" date="2004" name="Nat. Genet.">
        <title>Complete sequencing and characterization of 21,243 full-length human cDNAs.</title>
        <authorList>
            <person name="Ota T."/>
            <person name="Suzuki Y."/>
            <person name="Nishikawa T."/>
            <person name="Otsuki T."/>
            <person name="Sugiyama T."/>
            <person name="Irie R."/>
            <person name="Wakamatsu A."/>
            <person name="Hayashi K."/>
            <person name="Sato H."/>
            <person name="Nagai K."/>
            <person name="Kimura K."/>
            <person name="Makita H."/>
            <person name="Sekine M."/>
            <person name="Obayashi M."/>
            <person name="Nishi T."/>
            <person name="Shibahara T."/>
            <person name="Tanaka T."/>
            <person name="Ishii S."/>
            <person name="Yamamoto J."/>
            <person name="Saito K."/>
            <person name="Kawai Y."/>
            <person name="Isono Y."/>
            <person name="Nakamura Y."/>
            <person name="Nagahari K."/>
            <person name="Murakami K."/>
            <person name="Yasuda T."/>
            <person name="Iwayanagi T."/>
            <person name="Wagatsuma M."/>
            <person name="Shiratori A."/>
            <person name="Sudo H."/>
            <person name="Hosoiri T."/>
            <person name="Kaku Y."/>
            <person name="Kodaira H."/>
            <person name="Kondo H."/>
            <person name="Sugawara M."/>
            <person name="Takahashi M."/>
            <person name="Kanda K."/>
            <person name="Yokoi T."/>
            <person name="Furuya T."/>
            <person name="Kikkawa E."/>
            <person name="Omura Y."/>
            <person name="Abe K."/>
            <person name="Kamihara K."/>
            <person name="Katsuta N."/>
            <person name="Sato K."/>
            <person name="Tanikawa M."/>
            <person name="Yamazaki M."/>
            <person name="Ninomiya K."/>
            <person name="Ishibashi T."/>
            <person name="Yamashita H."/>
            <person name="Murakawa K."/>
            <person name="Fujimori K."/>
            <person name="Tanai H."/>
            <person name="Kimata M."/>
            <person name="Watanabe M."/>
            <person name="Hiraoka S."/>
            <person name="Chiba Y."/>
            <person name="Ishida S."/>
            <person name="Ono Y."/>
            <person name="Takiguchi S."/>
            <person name="Watanabe S."/>
            <person name="Yosida M."/>
            <person name="Hotuta T."/>
            <person name="Kusano J."/>
            <person name="Kanehori K."/>
            <person name="Takahashi-Fujii A."/>
            <person name="Hara H."/>
            <person name="Tanase T.-O."/>
            <person name="Nomura Y."/>
            <person name="Togiya S."/>
            <person name="Komai F."/>
            <person name="Hara R."/>
            <person name="Takeuchi K."/>
            <person name="Arita M."/>
            <person name="Imose N."/>
            <person name="Musashino K."/>
            <person name="Yuuki H."/>
            <person name="Oshima A."/>
            <person name="Sasaki N."/>
            <person name="Aotsuka S."/>
            <person name="Yoshikawa Y."/>
            <person name="Matsunawa H."/>
            <person name="Ichihara T."/>
            <person name="Shiohata N."/>
            <person name="Sano S."/>
            <person name="Moriya S."/>
            <person name="Momiyama H."/>
            <person name="Satoh N."/>
            <person name="Takami S."/>
            <person name="Terashima Y."/>
            <person name="Suzuki O."/>
            <person name="Nakagawa S."/>
            <person name="Senoh A."/>
            <person name="Mizoguchi H."/>
            <person name="Goto Y."/>
            <person name="Shimizu F."/>
            <person name="Wakebe H."/>
            <person name="Hishigaki H."/>
            <person name="Watanabe T."/>
            <person name="Sugiyama A."/>
            <person name="Takemoto M."/>
            <person name="Kawakami B."/>
            <person name="Yamazaki M."/>
            <person name="Watanabe K."/>
            <person name="Kumagai A."/>
            <person name="Itakura S."/>
            <person name="Fukuzumi Y."/>
            <person name="Fujimori Y."/>
            <person name="Komiyama M."/>
            <person name="Tashiro H."/>
            <person name="Tanigami A."/>
            <person name="Fujiwara T."/>
            <person name="Ono T."/>
            <person name="Yamada K."/>
            <person name="Fujii Y."/>
            <person name="Ozaki K."/>
            <person name="Hirao M."/>
            <person name="Ohmori Y."/>
            <person name="Kawabata A."/>
            <person name="Hikiji T."/>
            <person name="Kobatake N."/>
            <person name="Inagaki H."/>
            <person name="Ikema Y."/>
            <person name="Okamoto S."/>
            <person name="Okitani R."/>
            <person name="Kawakami T."/>
            <person name="Noguchi S."/>
            <person name="Itoh T."/>
            <person name="Shigeta K."/>
            <person name="Senba T."/>
            <person name="Matsumura K."/>
            <person name="Nakajima Y."/>
            <person name="Mizuno T."/>
            <person name="Morinaga M."/>
            <person name="Sasaki M."/>
            <person name="Togashi T."/>
            <person name="Oyama M."/>
            <person name="Hata H."/>
            <person name="Watanabe M."/>
            <person name="Komatsu T."/>
            <person name="Mizushima-Sugano J."/>
            <person name="Satoh T."/>
            <person name="Shirai Y."/>
            <person name="Takahashi Y."/>
            <person name="Nakagawa K."/>
            <person name="Okumura K."/>
            <person name="Nagase T."/>
            <person name="Nomura N."/>
            <person name="Kikuchi H."/>
            <person name="Masuho Y."/>
            <person name="Yamashita R."/>
            <person name="Nakai K."/>
            <person name="Yada T."/>
            <person name="Nakamura Y."/>
            <person name="Ohara O."/>
            <person name="Isogai T."/>
            <person name="Sugano S."/>
        </authorList>
    </citation>
    <scope>NUCLEOTIDE SEQUENCE [LARGE SCALE MRNA]</scope>
    <source>
        <tissue>Brain</tissue>
    </source>
</reference>
<reference key="2">
    <citation type="journal article" date="2004" name="Nature">
        <title>DNA sequence and analysis of human chromosome 9.</title>
        <authorList>
            <person name="Humphray S.J."/>
            <person name="Oliver K."/>
            <person name="Hunt A.R."/>
            <person name="Plumb R.W."/>
            <person name="Loveland J.E."/>
            <person name="Howe K.L."/>
            <person name="Andrews T.D."/>
            <person name="Searle S."/>
            <person name="Hunt S.E."/>
            <person name="Scott C.E."/>
            <person name="Jones M.C."/>
            <person name="Ainscough R."/>
            <person name="Almeida J.P."/>
            <person name="Ambrose K.D."/>
            <person name="Ashwell R.I.S."/>
            <person name="Babbage A.K."/>
            <person name="Babbage S."/>
            <person name="Bagguley C.L."/>
            <person name="Bailey J."/>
            <person name="Banerjee R."/>
            <person name="Barker D.J."/>
            <person name="Barlow K.F."/>
            <person name="Bates K."/>
            <person name="Beasley H."/>
            <person name="Beasley O."/>
            <person name="Bird C.P."/>
            <person name="Bray-Allen S."/>
            <person name="Brown A.J."/>
            <person name="Brown J.Y."/>
            <person name="Burford D."/>
            <person name="Burrill W."/>
            <person name="Burton J."/>
            <person name="Carder C."/>
            <person name="Carter N.P."/>
            <person name="Chapman J.C."/>
            <person name="Chen Y."/>
            <person name="Clarke G."/>
            <person name="Clark S.Y."/>
            <person name="Clee C.M."/>
            <person name="Clegg S."/>
            <person name="Collier R.E."/>
            <person name="Corby N."/>
            <person name="Crosier M."/>
            <person name="Cummings A.T."/>
            <person name="Davies J."/>
            <person name="Dhami P."/>
            <person name="Dunn M."/>
            <person name="Dutta I."/>
            <person name="Dyer L.W."/>
            <person name="Earthrowl M.E."/>
            <person name="Faulkner L."/>
            <person name="Fleming C.J."/>
            <person name="Frankish A."/>
            <person name="Frankland J.A."/>
            <person name="French L."/>
            <person name="Fricker D.G."/>
            <person name="Garner P."/>
            <person name="Garnett J."/>
            <person name="Ghori J."/>
            <person name="Gilbert J.G.R."/>
            <person name="Glison C."/>
            <person name="Grafham D.V."/>
            <person name="Gribble S."/>
            <person name="Griffiths C."/>
            <person name="Griffiths-Jones S."/>
            <person name="Grocock R."/>
            <person name="Guy J."/>
            <person name="Hall R.E."/>
            <person name="Hammond S."/>
            <person name="Harley J.L."/>
            <person name="Harrison E.S.I."/>
            <person name="Hart E.A."/>
            <person name="Heath P.D."/>
            <person name="Henderson C.D."/>
            <person name="Hopkins B.L."/>
            <person name="Howard P.J."/>
            <person name="Howden P.J."/>
            <person name="Huckle E."/>
            <person name="Johnson C."/>
            <person name="Johnson D."/>
            <person name="Joy A.A."/>
            <person name="Kay M."/>
            <person name="Keenan S."/>
            <person name="Kershaw J.K."/>
            <person name="Kimberley A.M."/>
            <person name="King A."/>
            <person name="Knights A."/>
            <person name="Laird G.K."/>
            <person name="Langford C."/>
            <person name="Lawlor S."/>
            <person name="Leongamornlert D.A."/>
            <person name="Leversha M."/>
            <person name="Lloyd C."/>
            <person name="Lloyd D.M."/>
            <person name="Lovell J."/>
            <person name="Martin S."/>
            <person name="Mashreghi-Mohammadi M."/>
            <person name="Matthews L."/>
            <person name="McLaren S."/>
            <person name="McLay K.E."/>
            <person name="McMurray A."/>
            <person name="Milne S."/>
            <person name="Nickerson T."/>
            <person name="Nisbett J."/>
            <person name="Nordsiek G."/>
            <person name="Pearce A.V."/>
            <person name="Peck A.I."/>
            <person name="Porter K.M."/>
            <person name="Pandian R."/>
            <person name="Pelan S."/>
            <person name="Phillimore B."/>
            <person name="Povey S."/>
            <person name="Ramsey Y."/>
            <person name="Rand V."/>
            <person name="Scharfe M."/>
            <person name="Sehra H.K."/>
            <person name="Shownkeen R."/>
            <person name="Sims S.K."/>
            <person name="Skuce C.D."/>
            <person name="Smith M."/>
            <person name="Steward C.A."/>
            <person name="Swarbreck D."/>
            <person name="Sycamore N."/>
            <person name="Tester J."/>
            <person name="Thorpe A."/>
            <person name="Tracey A."/>
            <person name="Tromans A."/>
            <person name="Thomas D.W."/>
            <person name="Wall M."/>
            <person name="Wallis J.M."/>
            <person name="West A.P."/>
            <person name="Whitehead S.L."/>
            <person name="Willey D.L."/>
            <person name="Williams S.A."/>
            <person name="Wilming L."/>
            <person name="Wray P.W."/>
            <person name="Young L."/>
            <person name="Ashurst J.L."/>
            <person name="Coulson A."/>
            <person name="Blocker H."/>
            <person name="Durbin R.M."/>
            <person name="Sulston J.E."/>
            <person name="Hubbard T."/>
            <person name="Jackson M.J."/>
            <person name="Bentley D.R."/>
            <person name="Beck S."/>
            <person name="Rogers J."/>
            <person name="Dunham I."/>
        </authorList>
    </citation>
    <scope>NUCLEOTIDE SEQUENCE [LARGE SCALE GENOMIC DNA]</scope>
</reference>
<name>Z658B_HUMAN</name>
<feature type="chain" id="PRO_0000280434" description="Zinc finger protein 658B">
    <location>
        <begin position="1"/>
        <end position="819"/>
    </location>
</feature>
<feature type="zinc finger region" description="C2H2-type 1; degenerate" evidence="1">
    <location>
        <begin position="141"/>
        <end position="166"/>
    </location>
</feature>
<feature type="zinc finger region" description="C2H2-type 2" evidence="1">
    <location>
        <begin position="200"/>
        <end position="222"/>
    </location>
</feature>
<feature type="zinc finger region" description="C2H2-type 3" evidence="1">
    <location>
        <begin position="278"/>
        <end position="300"/>
    </location>
</feature>
<feature type="zinc finger region" description="C2H2-type 4" evidence="1">
    <location>
        <begin position="306"/>
        <end position="328"/>
    </location>
</feature>
<feature type="zinc finger region" description="C2H2-type 5" evidence="1">
    <location>
        <begin position="334"/>
        <end position="356"/>
    </location>
</feature>
<feature type="zinc finger region" description="C2H2-type 6" evidence="1">
    <location>
        <begin position="362"/>
        <end position="384"/>
    </location>
</feature>
<feature type="zinc finger region" description="C2H2-type 7" evidence="1">
    <location>
        <begin position="390"/>
        <end position="412"/>
    </location>
</feature>
<feature type="zinc finger region" description="C2H2-type 8" evidence="1">
    <location>
        <begin position="418"/>
        <end position="440"/>
    </location>
</feature>
<feature type="zinc finger region" description="C2H2-type 9" evidence="1">
    <location>
        <begin position="446"/>
        <end position="468"/>
    </location>
</feature>
<feature type="zinc finger region" description="C2H2-type 10" evidence="1">
    <location>
        <begin position="474"/>
        <end position="496"/>
    </location>
</feature>
<feature type="zinc finger region" description="C2H2-type 11" evidence="1">
    <location>
        <begin position="502"/>
        <end position="524"/>
    </location>
</feature>
<feature type="zinc finger region" description="C2H2-type 12" evidence="1">
    <location>
        <begin position="530"/>
        <end position="552"/>
    </location>
</feature>
<feature type="zinc finger region" description="C2H2-type 13" evidence="1">
    <location>
        <begin position="558"/>
        <end position="580"/>
    </location>
</feature>
<feature type="zinc finger region" description="C2H2-type 14" evidence="1">
    <location>
        <begin position="586"/>
        <end position="608"/>
    </location>
</feature>
<feature type="zinc finger region" description="C2H2-type 15" evidence="1">
    <location>
        <begin position="614"/>
        <end position="636"/>
    </location>
</feature>
<feature type="zinc finger region" description="C2H2-type 16; degenerate" evidence="1">
    <location>
        <begin position="642"/>
        <end position="664"/>
    </location>
</feature>
<feature type="zinc finger region" description="C2H2-type 17" evidence="1">
    <location>
        <begin position="670"/>
        <end position="692"/>
    </location>
</feature>
<feature type="zinc finger region" description="C2H2-type 18" evidence="1">
    <location>
        <begin position="698"/>
        <end position="720"/>
    </location>
</feature>
<feature type="zinc finger region" description="C2H2-type 19" evidence="1">
    <location>
        <begin position="726"/>
        <end position="748"/>
    </location>
</feature>
<feature type="zinc finger region" description="C2H2-type 20" evidence="1">
    <location>
        <begin position="754"/>
        <end position="776"/>
    </location>
</feature>
<feature type="zinc finger region" description="C2H2-type 21" evidence="1">
    <location>
        <begin position="782"/>
        <end position="805"/>
    </location>
</feature>
<feature type="sequence conflict" description="In Ref. 1; BAC04610." evidence="2" ref="1">
    <original>R</original>
    <variation>H</variation>
    <location>
        <position position="664"/>
    </location>
</feature>
<keyword id="KW-0238">DNA-binding</keyword>
<keyword id="KW-0479">Metal-binding</keyword>
<keyword id="KW-0539">Nucleus</keyword>
<keyword id="KW-1185">Reference proteome</keyword>
<keyword id="KW-0677">Repeat</keyword>
<keyword id="KW-0804">Transcription</keyword>
<keyword id="KW-0805">Transcription regulation</keyword>
<keyword id="KW-0862">Zinc</keyword>
<keyword id="KW-0863">Zinc-finger</keyword>
<comment type="function">
    <text>May be involved in transcriptional regulation.</text>
</comment>
<comment type="subcellular location">
    <subcellularLocation>
        <location evidence="2">Nucleus</location>
    </subcellularLocation>
</comment>
<comment type="similarity">
    <text evidence="2">Belongs to the krueppel C2H2-type zinc-finger protein family.</text>
</comment>
<accession>Q4V348</accession>
<accession>Q8N946</accession>
<dbReference type="EMBL" id="AK095694">
    <property type="protein sequence ID" value="BAC04610.1"/>
    <property type="molecule type" value="mRNA"/>
</dbReference>
<dbReference type="EMBL" id="BX248098">
    <property type="protein sequence ID" value="CAI95420.1"/>
    <property type="molecule type" value="Genomic_DNA"/>
</dbReference>
<dbReference type="SMR" id="Q4V348"/>
<dbReference type="IntAct" id="Q4V348">
    <property type="interactions" value="1"/>
</dbReference>
<dbReference type="MINT" id="Q4V348"/>
<dbReference type="GlyGen" id="Q4V348">
    <property type="glycosylation" value="1 site, 1 O-linked glycan (1 site)"/>
</dbReference>
<dbReference type="iPTMnet" id="Q4V348"/>
<dbReference type="PhosphoSitePlus" id="Q4V348"/>
<dbReference type="BioMuta" id="HGNC:32033"/>
<dbReference type="DMDM" id="74753581"/>
<dbReference type="jPOST" id="Q4V348"/>
<dbReference type="MassIVE" id="Q4V348"/>
<dbReference type="PeptideAtlas" id="Q4V348"/>
<dbReference type="ProteomicsDB" id="62280"/>
<dbReference type="AGR" id="HGNC:32033"/>
<dbReference type="GeneCards" id="ZNF658B"/>
<dbReference type="HGNC" id="HGNC:32033">
    <property type="gene designation" value="ZNF658B"/>
</dbReference>
<dbReference type="neXtProt" id="NX_Q4V348"/>
<dbReference type="InParanoid" id="Q4V348"/>
<dbReference type="PAN-GO" id="Q4V348">
    <property type="GO annotations" value="4 GO annotations based on evolutionary models"/>
</dbReference>
<dbReference type="PhylomeDB" id="Q4V348"/>
<dbReference type="PathwayCommons" id="Q4V348"/>
<dbReference type="Reactome" id="R-HSA-212436">
    <property type="pathway name" value="Generic Transcription Pathway"/>
</dbReference>
<dbReference type="SignaLink" id="Q4V348"/>
<dbReference type="ChiTaRS" id="ZNF658B">
    <property type="organism name" value="human"/>
</dbReference>
<dbReference type="Pharos" id="Q4V348">
    <property type="development level" value="Tdark"/>
</dbReference>
<dbReference type="PRO" id="PR:Q4V348"/>
<dbReference type="Proteomes" id="UP000005640">
    <property type="component" value="Unplaced"/>
</dbReference>
<dbReference type="RNAct" id="Q4V348">
    <property type="molecule type" value="protein"/>
</dbReference>
<dbReference type="GO" id="GO:0005634">
    <property type="term" value="C:nucleus"/>
    <property type="evidence" value="ECO:0000318"/>
    <property type="project" value="GO_Central"/>
</dbReference>
<dbReference type="GO" id="GO:0003677">
    <property type="term" value="F:DNA binding"/>
    <property type="evidence" value="ECO:0007669"/>
    <property type="project" value="UniProtKB-KW"/>
</dbReference>
<dbReference type="GO" id="GO:0008270">
    <property type="term" value="F:zinc ion binding"/>
    <property type="evidence" value="ECO:0007669"/>
    <property type="project" value="UniProtKB-KW"/>
</dbReference>
<dbReference type="GO" id="GO:0006357">
    <property type="term" value="P:regulation of transcription by RNA polymerase II"/>
    <property type="evidence" value="ECO:0000318"/>
    <property type="project" value="GO_Central"/>
</dbReference>
<dbReference type="FunFam" id="3.30.160.60:FF:004137">
    <property type="match status" value="1"/>
</dbReference>
<dbReference type="FunFam" id="3.30.160.60:FF:004935">
    <property type="match status" value="1"/>
</dbReference>
<dbReference type="FunFam" id="3.30.160.60:FF:005272">
    <property type="match status" value="1"/>
</dbReference>
<dbReference type="FunFam" id="3.30.160.60:FF:000295">
    <property type="entry name" value="zinc finger protein 19"/>
    <property type="match status" value="1"/>
</dbReference>
<dbReference type="FunFam" id="3.30.160.60:FF:002343">
    <property type="entry name" value="Zinc finger protein 33A"/>
    <property type="match status" value="1"/>
</dbReference>
<dbReference type="FunFam" id="3.30.160.60:FF:002402">
    <property type="entry name" value="Zinc finger protein 347"/>
    <property type="match status" value="2"/>
</dbReference>
<dbReference type="FunFam" id="3.30.160.60:FF:000016">
    <property type="entry name" value="zinc finger protein 37 homolog"/>
    <property type="match status" value="1"/>
</dbReference>
<dbReference type="FunFam" id="3.30.160.60:FF:001498">
    <property type="entry name" value="Zinc finger protein 404"/>
    <property type="match status" value="1"/>
</dbReference>
<dbReference type="FunFam" id="3.30.160.60:FF:002090">
    <property type="entry name" value="Zinc finger protein 473"/>
    <property type="match status" value="1"/>
</dbReference>
<dbReference type="FunFam" id="3.30.160.60:FF:001437">
    <property type="entry name" value="Zinc finger protein 594"/>
    <property type="match status" value="1"/>
</dbReference>
<dbReference type="FunFam" id="3.30.160.60:FF:000361">
    <property type="entry name" value="Zinc finger protein 658"/>
    <property type="match status" value="8"/>
</dbReference>
<dbReference type="FunFam" id="3.30.160.60:FF:001745">
    <property type="entry name" value="Zinc finger protein 658"/>
    <property type="match status" value="1"/>
</dbReference>
<dbReference type="FunFam" id="3.30.160.60:FF:001922">
    <property type="entry name" value="Zinc finger protein 658"/>
    <property type="match status" value="2"/>
</dbReference>
<dbReference type="FunFam" id="3.30.160.60:FF:002346">
    <property type="entry name" value="Zinc finger protein 658"/>
    <property type="match status" value="1"/>
</dbReference>
<dbReference type="FunFam" id="3.30.160.60:FF:003209">
    <property type="entry name" value="Zinc finger protein 658B"/>
    <property type="match status" value="1"/>
</dbReference>
<dbReference type="Gene3D" id="3.30.160.60">
    <property type="entry name" value="Classic Zinc Finger"/>
    <property type="match status" value="22"/>
</dbReference>
<dbReference type="InterPro" id="IPR050752">
    <property type="entry name" value="C2H2-ZF_domain"/>
</dbReference>
<dbReference type="InterPro" id="IPR036236">
    <property type="entry name" value="Znf_C2H2_sf"/>
</dbReference>
<dbReference type="InterPro" id="IPR013087">
    <property type="entry name" value="Znf_C2H2_type"/>
</dbReference>
<dbReference type="PANTHER" id="PTHR24384:SF245">
    <property type="entry name" value="C2H2-TYPE DOMAIN-CONTAINING PROTEIN"/>
    <property type="match status" value="1"/>
</dbReference>
<dbReference type="PANTHER" id="PTHR24384">
    <property type="entry name" value="FINGER PUTATIVE TRANSCRIPTION FACTOR FAMILY-RELATED"/>
    <property type="match status" value="1"/>
</dbReference>
<dbReference type="Pfam" id="PF00096">
    <property type="entry name" value="zf-C2H2"/>
    <property type="match status" value="20"/>
</dbReference>
<dbReference type="SMART" id="SM00355">
    <property type="entry name" value="ZnF_C2H2"/>
    <property type="match status" value="20"/>
</dbReference>
<dbReference type="SUPFAM" id="SSF57667">
    <property type="entry name" value="beta-beta-alpha zinc fingers"/>
    <property type="match status" value="14"/>
</dbReference>
<dbReference type="PROSITE" id="PS00028">
    <property type="entry name" value="ZINC_FINGER_C2H2_1"/>
    <property type="match status" value="19"/>
</dbReference>
<dbReference type="PROSITE" id="PS50157">
    <property type="entry name" value="ZINC_FINGER_C2H2_2"/>
    <property type="match status" value="21"/>
</dbReference>